<comment type="function">
    <text evidence="2">GTP hydrolase that promotes the GTP-dependent binding of aminoacyl-tRNA to the A-site of ribosomes during protein biosynthesis.</text>
</comment>
<comment type="catalytic activity">
    <reaction evidence="2">
        <text>GTP + H2O = GDP + phosphate + H(+)</text>
        <dbReference type="Rhea" id="RHEA:19669"/>
        <dbReference type="ChEBI" id="CHEBI:15377"/>
        <dbReference type="ChEBI" id="CHEBI:15378"/>
        <dbReference type="ChEBI" id="CHEBI:37565"/>
        <dbReference type="ChEBI" id="CHEBI:43474"/>
        <dbReference type="ChEBI" id="CHEBI:58189"/>
        <dbReference type="EC" id="3.6.5.3"/>
    </reaction>
    <physiologicalReaction direction="left-to-right" evidence="2">
        <dbReference type="Rhea" id="RHEA:19670"/>
    </physiologicalReaction>
</comment>
<comment type="subunit">
    <text evidence="2">Monomer.</text>
</comment>
<comment type="subcellular location">
    <subcellularLocation>
        <location evidence="2">Cytoplasm</location>
    </subcellularLocation>
</comment>
<comment type="similarity">
    <text evidence="2">Belongs to the TRAFAC class translation factor GTPase superfamily. Classic translation factor GTPase family. EF-Tu/EF-1A subfamily.</text>
</comment>
<accession>Q877T5</accession>
<name>EFTU_VIBPA</name>
<reference key="1">
    <citation type="journal article" date="2003" name="Lancet">
        <title>Genome sequence of Vibrio parahaemolyticus: a pathogenic mechanism distinct from that of V. cholerae.</title>
        <authorList>
            <person name="Makino K."/>
            <person name="Oshima K."/>
            <person name="Kurokawa K."/>
            <person name="Yokoyama K."/>
            <person name="Uda T."/>
            <person name="Tagomori K."/>
            <person name="Iijima Y."/>
            <person name="Najima M."/>
            <person name="Nakano M."/>
            <person name="Yamashita A."/>
            <person name="Kubota Y."/>
            <person name="Kimura S."/>
            <person name="Yasunaga T."/>
            <person name="Honda T."/>
            <person name="Shinagawa H."/>
            <person name="Hattori M."/>
            <person name="Iida T."/>
        </authorList>
    </citation>
    <scope>NUCLEOTIDE SEQUENCE [LARGE SCALE GENOMIC DNA]</scope>
    <source>
        <strain>RIMD 2210633</strain>
    </source>
</reference>
<gene>
    <name evidence="2" type="primary">tufA</name>
    <name type="ordered locus">VP2770</name>
</gene>
<gene>
    <name evidence="2" type="primary">tufB</name>
    <name type="ordered locus">VP2930</name>
</gene>
<proteinExistence type="inferred from homology"/>
<sequence>MSKEKFERTKPHVNVGTIGHVDHGKTTLTAAICTTLAKVYGGEAKDFASIDNAPEERERGITIATSHVEYDTPSRHYAHVDCPGHADYVKNMITGAAQMDGGILVVAATDGPMPQTREHILLGRQVGIPYIIVFMNKCDMVDDEELLELVEMEVRELLSEYDFPGDDLPVIQGSALGALNGEEQWEAKIVELAEALDTYIPEPERAVDQPFLMPIEDVFSIQGRGTVVTGRIERGILTVGDEVAIVGIKDTTTTTCTGVEMFRKLLDEGRAGENVGALLRGTKRDEVERGQVLAKPGSITPHTKFESEVYVLSKEEGGRHTPFFKGYRPQFYFRTTDVTGDISLPEGVEMVMPGDNIQMVVELIAPIAMDEGLRFAIREGGRTVGAGVVAKIFE</sequence>
<protein>
    <recommendedName>
        <fullName evidence="2">Elongation factor Tu</fullName>
        <shortName evidence="2">EF-Tu</shortName>
        <ecNumber evidence="2">3.6.5.3</ecNumber>
    </recommendedName>
</protein>
<organism>
    <name type="scientific">Vibrio parahaemolyticus serotype O3:K6 (strain RIMD 2210633)</name>
    <dbReference type="NCBI Taxonomy" id="223926"/>
    <lineage>
        <taxon>Bacteria</taxon>
        <taxon>Pseudomonadati</taxon>
        <taxon>Pseudomonadota</taxon>
        <taxon>Gammaproteobacteria</taxon>
        <taxon>Vibrionales</taxon>
        <taxon>Vibrionaceae</taxon>
        <taxon>Vibrio</taxon>
    </lineage>
</organism>
<feature type="chain" id="PRO_0000091433" description="Elongation factor Tu">
    <location>
        <begin position="1"/>
        <end position="394"/>
    </location>
</feature>
<feature type="domain" description="tr-type G">
    <location>
        <begin position="10"/>
        <end position="204"/>
    </location>
</feature>
<feature type="region of interest" description="G1" evidence="1">
    <location>
        <begin position="19"/>
        <end position="26"/>
    </location>
</feature>
<feature type="region of interest" description="G2" evidence="1">
    <location>
        <begin position="60"/>
        <end position="64"/>
    </location>
</feature>
<feature type="region of interest" description="G3" evidence="1">
    <location>
        <begin position="81"/>
        <end position="84"/>
    </location>
</feature>
<feature type="region of interest" description="G4" evidence="1">
    <location>
        <begin position="136"/>
        <end position="139"/>
    </location>
</feature>
<feature type="region of interest" description="G5" evidence="1">
    <location>
        <begin position="174"/>
        <end position="176"/>
    </location>
</feature>
<feature type="binding site" evidence="2">
    <location>
        <begin position="19"/>
        <end position="26"/>
    </location>
    <ligand>
        <name>GTP</name>
        <dbReference type="ChEBI" id="CHEBI:37565"/>
    </ligand>
</feature>
<feature type="binding site" evidence="2">
    <location>
        <position position="26"/>
    </location>
    <ligand>
        <name>Mg(2+)</name>
        <dbReference type="ChEBI" id="CHEBI:18420"/>
    </ligand>
</feature>
<feature type="binding site" evidence="2">
    <location>
        <begin position="81"/>
        <end position="85"/>
    </location>
    <ligand>
        <name>GTP</name>
        <dbReference type="ChEBI" id="CHEBI:37565"/>
    </ligand>
</feature>
<feature type="binding site" evidence="2">
    <location>
        <begin position="136"/>
        <end position="139"/>
    </location>
    <ligand>
        <name>GTP</name>
        <dbReference type="ChEBI" id="CHEBI:37565"/>
    </ligand>
</feature>
<dbReference type="EC" id="3.6.5.3" evidence="2"/>
<dbReference type="EMBL" id="BA000031">
    <property type="protein sequence ID" value="BAC61033.1"/>
    <property type="molecule type" value="Genomic_DNA"/>
</dbReference>
<dbReference type="EMBL" id="BA000031">
    <property type="protein sequence ID" value="BAC61193.1"/>
    <property type="molecule type" value="Genomic_DNA"/>
</dbReference>
<dbReference type="RefSeq" id="NP_799149.1">
    <property type="nucleotide sequence ID" value="NC_004603.1"/>
</dbReference>
<dbReference type="RefSeq" id="NP_799309.1">
    <property type="nucleotide sequence ID" value="NC_004603.1"/>
</dbReference>
<dbReference type="SMR" id="Q877T5"/>
<dbReference type="GeneID" id="1190505"/>
<dbReference type="KEGG" id="vpa:VP2770"/>
<dbReference type="KEGG" id="vpa:VP2930"/>
<dbReference type="PATRIC" id="fig|223926.6.peg.2666"/>
<dbReference type="eggNOG" id="COG0050">
    <property type="taxonomic scope" value="Bacteria"/>
</dbReference>
<dbReference type="HOGENOM" id="CLU_007265_0_0_6"/>
<dbReference type="Proteomes" id="UP000002493">
    <property type="component" value="Chromosome 1"/>
</dbReference>
<dbReference type="GO" id="GO:0005829">
    <property type="term" value="C:cytosol"/>
    <property type="evidence" value="ECO:0007669"/>
    <property type="project" value="TreeGrafter"/>
</dbReference>
<dbReference type="GO" id="GO:0005525">
    <property type="term" value="F:GTP binding"/>
    <property type="evidence" value="ECO:0007669"/>
    <property type="project" value="UniProtKB-UniRule"/>
</dbReference>
<dbReference type="GO" id="GO:0003924">
    <property type="term" value="F:GTPase activity"/>
    <property type="evidence" value="ECO:0007669"/>
    <property type="project" value="InterPro"/>
</dbReference>
<dbReference type="GO" id="GO:0097216">
    <property type="term" value="F:guanosine tetraphosphate binding"/>
    <property type="evidence" value="ECO:0007669"/>
    <property type="project" value="UniProtKB-ARBA"/>
</dbReference>
<dbReference type="GO" id="GO:0003746">
    <property type="term" value="F:translation elongation factor activity"/>
    <property type="evidence" value="ECO:0007669"/>
    <property type="project" value="UniProtKB-UniRule"/>
</dbReference>
<dbReference type="CDD" id="cd01884">
    <property type="entry name" value="EF_Tu"/>
    <property type="match status" value="1"/>
</dbReference>
<dbReference type="CDD" id="cd03697">
    <property type="entry name" value="EFTU_II"/>
    <property type="match status" value="1"/>
</dbReference>
<dbReference type="CDD" id="cd03707">
    <property type="entry name" value="EFTU_III"/>
    <property type="match status" value="1"/>
</dbReference>
<dbReference type="FunFam" id="2.40.30.10:FF:000001">
    <property type="entry name" value="Elongation factor Tu"/>
    <property type="match status" value="1"/>
</dbReference>
<dbReference type="FunFam" id="3.40.50.300:FF:000003">
    <property type="entry name" value="Elongation factor Tu"/>
    <property type="match status" value="1"/>
</dbReference>
<dbReference type="Gene3D" id="3.40.50.300">
    <property type="entry name" value="P-loop containing nucleotide triphosphate hydrolases"/>
    <property type="match status" value="1"/>
</dbReference>
<dbReference type="Gene3D" id="2.40.30.10">
    <property type="entry name" value="Translation factors"/>
    <property type="match status" value="2"/>
</dbReference>
<dbReference type="HAMAP" id="MF_00118_B">
    <property type="entry name" value="EF_Tu_B"/>
    <property type="match status" value="1"/>
</dbReference>
<dbReference type="InterPro" id="IPR041709">
    <property type="entry name" value="EF-Tu_GTP-bd"/>
</dbReference>
<dbReference type="InterPro" id="IPR050055">
    <property type="entry name" value="EF-Tu_GTPase"/>
</dbReference>
<dbReference type="InterPro" id="IPR004161">
    <property type="entry name" value="EFTu-like_2"/>
</dbReference>
<dbReference type="InterPro" id="IPR033720">
    <property type="entry name" value="EFTU_2"/>
</dbReference>
<dbReference type="InterPro" id="IPR031157">
    <property type="entry name" value="G_TR_CS"/>
</dbReference>
<dbReference type="InterPro" id="IPR027417">
    <property type="entry name" value="P-loop_NTPase"/>
</dbReference>
<dbReference type="InterPro" id="IPR005225">
    <property type="entry name" value="Small_GTP-bd"/>
</dbReference>
<dbReference type="InterPro" id="IPR000795">
    <property type="entry name" value="T_Tr_GTP-bd_dom"/>
</dbReference>
<dbReference type="InterPro" id="IPR009000">
    <property type="entry name" value="Transl_B-barrel_sf"/>
</dbReference>
<dbReference type="InterPro" id="IPR009001">
    <property type="entry name" value="Transl_elong_EF1A/Init_IF2_C"/>
</dbReference>
<dbReference type="InterPro" id="IPR004541">
    <property type="entry name" value="Transl_elong_EFTu/EF1A_bac/org"/>
</dbReference>
<dbReference type="InterPro" id="IPR004160">
    <property type="entry name" value="Transl_elong_EFTu/EF1A_C"/>
</dbReference>
<dbReference type="NCBIfam" id="TIGR00485">
    <property type="entry name" value="EF-Tu"/>
    <property type="match status" value="1"/>
</dbReference>
<dbReference type="NCBIfam" id="NF000766">
    <property type="entry name" value="PRK00049.1"/>
    <property type="match status" value="1"/>
</dbReference>
<dbReference type="NCBIfam" id="NF009372">
    <property type="entry name" value="PRK12735.1"/>
    <property type="match status" value="1"/>
</dbReference>
<dbReference type="NCBIfam" id="NF009373">
    <property type="entry name" value="PRK12736.1"/>
    <property type="match status" value="1"/>
</dbReference>
<dbReference type="NCBIfam" id="TIGR00231">
    <property type="entry name" value="small_GTP"/>
    <property type="match status" value="1"/>
</dbReference>
<dbReference type="PANTHER" id="PTHR43721:SF22">
    <property type="entry name" value="ELONGATION FACTOR TU, MITOCHONDRIAL"/>
    <property type="match status" value="1"/>
</dbReference>
<dbReference type="PANTHER" id="PTHR43721">
    <property type="entry name" value="ELONGATION FACTOR TU-RELATED"/>
    <property type="match status" value="1"/>
</dbReference>
<dbReference type="Pfam" id="PF00009">
    <property type="entry name" value="GTP_EFTU"/>
    <property type="match status" value="1"/>
</dbReference>
<dbReference type="Pfam" id="PF03144">
    <property type="entry name" value="GTP_EFTU_D2"/>
    <property type="match status" value="1"/>
</dbReference>
<dbReference type="Pfam" id="PF03143">
    <property type="entry name" value="GTP_EFTU_D3"/>
    <property type="match status" value="1"/>
</dbReference>
<dbReference type="PRINTS" id="PR00315">
    <property type="entry name" value="ELONGATNFCT"/>
</dbReference>
<dbReference type="SUPFAM" id="SSF50465">
    <property type="entry name" value="EF-Tu/eEF-1alpha/eIF2-gamma C-terminal domain"/>
    <property type="match status" value="1"/>
</dbReference>
<dbReference type="SUPFAM" id="SSF52540">
    <property type="entry name" value="P-loop containing nucleoside triphosphate hydrolases"/>
    <property type="match status" value="1"/>
</dbReference>
<dbReference type="SUPFAM" id="SSF50447">
    <property type="entry name" value="Translation proteins"/>
    <property type="match status" value="1"/>
</dbReference>
<dbReference type="PROSITE" id="PS00301">
    <property type="entry name" value="G_TR_1"/>
    <property type="match status" value="1"/>
</dbReference>
<dbReference type="PROSITE" id="PS51722">
    <property type="entry name" value="G_TR_2"/>
    <property type="match status" value="1"/>
</dbReference>
<keyword id="KW-0963">Cytoplasm</keyword>
<keyword id="KW-0251">Elongation factor</keyword>
<keyword id="KW-0342">GTP-binding</keyword>
<keyword id="KW-0378">Hydrolase</keyword>
<keyword id="KW-0460">Magnesium</keyword>
<keyword id="KW-0479">Metal-binding</keyword>
<keyword id="KW-0547">Nucleotide-binding</keyword>
<keyword id="KW-0648">Protein biosynthesis</keyword>
<evidence type="ECO:0000250" key="1"/>
<evidence type="ECO:0000255" key="2">
    <source>
        <dbReference type="HAMAP-Rule" id="MF_00118"/>
    </source>
</evidence>